<evidence type="ECO:0000250" key="1"/>
<evidence type="ECO:0000255" key="2">
    <source>
        <dbReference type="HAMAP-Rule" id="MF_00491"/>
    </source>
</evidence>
<geneLocation type="chloroplast"/>
<sequence>MNDFPWLTIIVVFPISAGSLMLFLPHRGNKVNKWYTICICILELLLTTYAFCYNFKMDDPLIQLSEDYKWINFFDFYWRMGIDGLSIGTILLTGFITTLATLAAFPVTRDSRLFHFLMLAMYSGQIGSFSSRDLLLFFIMWELELIPVYLLLAMWGGKKRLYSATKFILYTAGSSIFLLIGVLGISLYGSNEPTLNLELLANQSYPVTLEILFYIGFLIAFAVKSPIIPLHTWLPDTHGEAHYSTCMLLAGILLKMGAYGLVRINMELLPHAHSMFSPWLMVVGTIQIIYAASTSPGQRNLKKRIAYSSVSHMGFIIIGISSITDPGLNGAILQIISHGFIGAALFFLAGTSYDRIRLVYLDEMGGMAISIPKIFTMFTILSMASLALPGMSGFIAELIVFFGIITSQKYFLIFKILIIFVMAIGMILTPIYLLSMSRQMFYGYKLINVKNFSFFDSGPRELFLSISILIPIIGIGIYPDFVLSLASDKVESILSNYFYG</sequence>
<accession>A4QKP5</accession>
<gene>
    <name evidence="2" type="primary">ndhD</name>
</gene>
<proteinExistence type="inferred from homology"/>
<comment type="catalytic activity">
    <reaction evidence="2">
        <text>a plastoquinone + NADH + (n+1) H(+)(in) = a plastoquinol + NAD(+) + n H(+)(out)</text>
        <dbReference type="Rhea" id="RHEA:42608"/>
        <dbReference type="Rhea" id="RHEA-COMP:9561"/>
        <dbReference type="Rhea" id="RHEA-COMP:9562"/>
        <dbReference type="ChEBI" id="CHEBI:15378"/>
        <dbReference type="ChEBI" id="CHEBI:17757"/>
        <dbReference type="ChEBI" id="CHEBI:57540"/>
        <dbReference type="ChEBI" id="CHEBI:57945"/>
        <dbReference type="ChEBI" id="CHEBI:62192"/>
    </reaction>
</comment>
<comment type="catalytic activity">
    <reaction evidence="2">
        <text>a plastoquinone + NADPH + (n+1) H(+)(in) = a plastoquinol + NADP(+) + n H(+)(out)</text>
        <dbReference type="Rhea" id="RHEA:42612"/>
        <dbReference type="Rhea" id="RHEA-COMP:9561"/>
        <dbReference type="Rhea" id="RHEA-COMP:9562"/>
        <dbReference type="ChEBI" id="CHEBI:15378"/>
        <dbReference type="ChEBI" id="CHEBI:17757"/>
        <dbReference type="ChEBI" id="CHEBI:57783"/>
        <dbReference type="ChEBI" id="CHEBI:58349"/>
        <dbReference type="ChEBI" id="CHEBI:62192"/>
    </reaction>
</comment>
<comment type="subcellular location">
    <subcellularLocation>
        <location evidence="2">Plastid</location>
        <location evidence="2">Chloroplast thylakoid membrane</location>
        <topology evidence="2">Multi-pass membrane protein</topology>
    </subcellularLocation>
</comment>
<comment type="RNA editing">
    <location>
        <position position="1" evidence="1"/>
    </location>
    <text evidence="1">The initiator methionine is created by RNA editing.</text>
</comment>
<comment type="similarity">
    <text evidence="2">Belongs to the complex I subunit 4 family.</text>
</comment>
<name>NU4C_CAPBU</name>
<keyword id="KW-0150">Chloroplast</keyword>
<keyword id="KW-0472">Membrane</keyword>
<keyword id="KW-0520">NAD</keyword>
<keyword id="KW-0521">NADP</keyword>
<keyword id="KW-0934">Plastid</keyword>
<keyword id="KW-0618">Plastoquinone</keyword>
<keyword id="KW-0874">Quinone</keyword>
<keyword id="KW-0691">RNA editing</keyword>
<keyword id="KW-0793">Thylakoid</keyword>
<keyword id="KW-1278">Translocase</keyword>
<keyword id="KW-0812">Transmembrane</keyword>
<keyword id="KW-1133">Transmembrane helix</keyword>
<protein>
    <recommendedName>
        <fullName evidence="2">NAD(P)H-quinone oxidoreductase chain 4, chloroplastic</fullName>
        <ecNumber evidence="2">7.1.1.-</ecNumber>
    </recommendedName>
    <alternativeName>
        <fullName evidence="2">NAD(P)H dehydrogenase, chain 4</fullName>
    </alternativeName>
    <alternativeName>
        <fullName evidence="2">NADH-plastoquinone oxidoreductase chain 4</fullName>
    </alternativeName>
</protein>
<feature type="chain" id="PRO_0000343274" description="NAD(P)H-quinone oxidoreductase chain 4, chloroplastic">
    <location>
        <begin position="1"/>
        <end position="500"/>
    </location>
</feature>
<feature type="transmembrane region" description="Helical" evidence="2">
    <location>
        <begin position="4"/>
        <end position="24"/>
    </location>
</feature>
<feature type="transmembrane region" description="Helical" evidence="2">
    <location>
        <begin position="35"/>
        <end position="55"/>
    </location>
</feature>
<feature type="transmembrane region" description="Helical" evidence="2">
    <location>
        <begin position="87"/>
        <end position="107"/>
    </location>
</feature>
<feature type="transmembrane region" description="Helical" evidence="2">
    <location>
        <begin position="113"/>
        <end position="130"/>
    </location>
</feature>
<feature type="transmembrane region" description="Helical" evidence="2">
    <location>
        <begin position="134"/>
        <end position="154"/>
    </location>
</feature>
<feature type="transmembrane region" description="Helical" evidence="2">
    <location>
        <begin position="167"/>
        <end position="187"/>
    </location>
</feature>
<feature type="transmembrane region" description="Helical" evidence="2">
    <location>
        <begin position="211"/>
        <end position="231"/>
    </location>
</feature>
<feature type="transmembrane region" description="Helical" evidence="2">
    <location>
        <begin position="242"/>
        <end position="262"/>
    </location>
</feature>
<feature type="transmembrane region" description="Helical" evidence="2">
    <location>
        <begin position="272"/>
        <end position="292"/>
    </location>
</feature>
<feature type="transmembrane region" description="Helical" evidence="2">
    <location>
        <begin position="305"/>
        <end position="325"/>
    </location>
</feature>
<feature type="transmembrane region" description="Helical" evidence="2">
    <location>
        <begin position="330"/>
        <end position="350"/>
    </location>
</feature>
<feature type="transmembrane region" description="Helical" evidence="2">
    <location>
        <begin position="364"/>
        <end position="384"/>
    </location>
</feature>
<feature type="transmembrane region" description="Helical" evidence="2">
    <location>
        <begin position="386"/>
        <end position="406"/>
    </location>
</feature>
<feature type="transmembrane region" description="Helical" evidence="2">
    <location>
        <begin position="411"/>
        <end position="431"/>
    </location>
</feature>
<feature type="transmembrane region" description="Helical" evidence="2">
    <location>
        <begin position="462"/>
        <end position="482"/>
    </location>
</feature>
<reference key="1">
    <citation type="submission" date="2007-03" db="EMBL/GenBank/DDBJ databases">
        <title>Sequencing analysis of Capsella bursa-pastoris JO22 chloroplast DNA.</title>
        <authorList>
            <person name="Hosouchi T."/>
            <person name="Tsuruoka H."/>
            <person name="Kotani H."/>
        </authorList>
    </citation>
    <scope>NUCLEOTIDE SEQUENCE [LARGE SCALE GENOMIC DNA]</scope>
</reference>
<organism>
    <name type="scientific">Capsella bursa-pastoris</name>
    <name type="common">Shepherd's purse</name>
    <name type="synonym">Thlaspi bursa-pastoris</name>
    <dbReference type="NCBI Taxonomy" id="3719"/>
    <lineage>
        <taxon>Eukaryota</taxon>
        <taxon>Viridiplantae</taxon>
        <taxon>Streptophyta</taxon>
        <taxon>Embryophyta</taxon>
        <taxon>Tracheophyta</taxon>
        <taxon>Spermatophyta</taxon>
        <taxon>Magnoliopsida</taxon>
        <taxon>eudicotyledons</taxon>
        <taxon>Gunneridae</taxon>
        <taxon>Pentapetalae</taxon>
        <taxon>rosids</taxon>
        <taxon>malvids</taxon>
        <taxon>Brassicales</taxon>
        <taxon>Brassicaceae</taxon>
        <taxon>Camelineae</taxon>
        <taxon>Capsella</taxon>
    </lineage>
</organism>
<dbReference type="EC" id="7.1.1.-" evidence="2"/>
<dbReference type="EMBL" id="AP009371">
    <property type="protein sequence ID" value="BAF50250.1"/>
    <property type="status" value="ALT_SEQ"/>
    <property type="molecule type" value="Genomic_DNA"/>
</dbReference>
<dbReference type="RefSeq" id="YP_001123425.1">
    <property type="nucleotide sequence ID" value="NC_009270.1"/>
</dbReference>
<dbReference type="SMR" id="A4QKP5"/>
<dbReference type="GeneID" id="4961644"/>
<dbReference type="GO" id="GO:0009535">
    <property type="term" value="C:chloroplast thylakoid membrane"/>
    <property type="evidence" value="ECO:0007669"/>
    <property type="project" value="UniProtKB-SubCell"/>
</dbReference>
<dbReference type="GO" id="GO:0008137">
    <property type="term" value="F:NADH dehydrogenase (ubiquinone) activity"/>
    <property type="evidence" value="ECO:0007669"/>
    <property type="project" value="InterPro"/>
</dbReference>
<dbReference type="GO" id="GO:0048039">
    <property type="term" value="F:ubiquinone binding"/>
    <property type="evidence" value="ECO:0007669"/>
    <property type="project" value="TreeGrafter"/>
</dbReference>
<dbReference type="GO" id="GO:0042773">
    <property type="term" value="P:ATP synthesis coupled electron transport"/>
    <property type="evidence" value="ECO:0007669"/>
    <property type="project" value="InterPro"/>
</dbReference>
<dbReference type="GO" id="GO:0015990">
    <property type="term" value="P:electron transport coupled proton transport"/>
    <property type="evidence" value="ECO:0007669"/>
    <property type="project" value="TreeGrafter"/>
</dbReference>
<dbReference type="HAMAP" id="MF_00491">
    <property type="entry name" value="NDH1_NuoM"/>
    <property type="match status" value="1"/>
</dbReference>
<dbReference type="InterPro" id="IPR022997">
    <property type="entry name" value="NADH_Q_OxRdtase_chain4"/>
</dbReference>
<dbReference type="InterPro" id="IPR010227">
    <property type="entry name" value="NADH_Q_OxRdtase_chainM/4"/>
</dbReference>
<dbReference type="InterPro" id="IPR003918">
    <property type="entry name" value="NADH_UbQ_OxRdtase"/>
</dbReference>
<dbReference type="InterPro" id="IPR001750">
    <property type="entry name" value="ND/Mrp_TM"/>
</dbReference>
<dbReference type="NCBIfam" id="TIGR01972">
    <property type="entry name" value="NDH_I_M"/>
    <property type="match status" value="1"/>
</dbReference>
<dbReference type="PANTHER" id="PTHR43507:SF21">
    <property type="entry name" value="NAD(P)H-QUINONE OXIDOREDUCTASE CHAIN 4, CHLOROPLASTIC"/>
    <property type="match status" value="1"/>
</dbReference>
<dbReference type="PANTHER" id="PTHR43507">
    <property type="entry name" value="NADH-UBIQUINONE OXIDOREDUCTASE CHAIN 4"/>
    <property type="match status" value="1"/>
</dbReference>
<dbReference type="Pfam" id="PF00361">
    <property type="entry name" value="Proton_antipo_M"/>
    <property type="match status" value="1"/>
</dbReference>
<dbReference type="PRINTS" id="PR01437">
    <property type="entry name" value="NUOXDRDTASE4"/>
</dbReference>